<protein>
    <recommendedName>
        <fullName>E3 ubiquitin-protein ligase SINA-like 8</fullName>
        <ecNumber>2.3.2.27</ecNumber>
    </recommendedName>
    <alternativeName>
        <fullName evidence="3">RING-type E3 ubiquitin transferase SINA-like 8</fullName>
    </alternativeName>
    <alternativeName>
        <fullName>Seven in absentia-like protein 8</fullName>
    </alternativeName>
</protein>
<accession>Q9FKD6</accession>
<accession>F4K8N6</accession>
<comment type="function">
    <text evidence="1">E3 ubiquitin-protein ligase that mediates ubiquitination and subsequent proteasomal degradation of target proteins. E3 ubiquitin ligases accept ubiquitin from an E2 ubiquitin-conjugating enzyme in the form of a thioester and then directly transfers the ubiquitin to targeted substrates. It probably triggers the ubiquitin-mediated degradation of different substrates.</text>
</comment>
<comment type="catalytic activity">
    <reaction>
        <text>S-ubiquitinyl-[E2 ubiquitin-conjugating enzyme]-L-cysteine + [acceptor protein]-L-lysine = [E2 ubiquitin-conjugating enzyme]-L-cysteine + N(6)-ubiquitinyl-[acceptor protein]-L-lysine.</text>
        <dbReference type="EC" id="2.3.2.27"/>
    </reaction>
</comment>
<comment type="pathway">
    <text>Protein modification; protein ubiquitination.</text>
</comment>
<comment type="domain">
    <text evidence="1">The RING-type zinc finger domain is essential for ubiquitin ligase activity.</text>
</comment>
<comment type="domain">
    <text evidence="1">The SBD domain (substrate-binding domain) mediates the homodimerization and the interaction with substrate proteins. It is related to the TRAF family.</text>
</comment>
<comment type="similarity">
    <text evidence="3">Belongs to the SINA (Seven in absentia) family.</text>
</comment>
<comment type="sequence caution" evidence="3">
    <conflict type="erroneous gene model prediction">
        <sequence resource="EMBL-CDS" id="AED94245"/>
    </conflict>
</comment>
<comment type="sequence caution" evidence="3">
    <conflict type="erroneous gene model prediction">
        <sequence resource="EMBL-CDS" id="BAB09036"/>
    </conflict>
</comment>
<keyword id="KW-0479">Metal-binding</keyword>
<keyword id="KW-1185">Reference proteome</keyword>
<keyword id="KW-0808">Transferase</keyword>
<keyword id="KW-0833">Ubl conjugation pathway</keyword>
<keyword id="KW-0862">Zinc</keyword>
<keyword id="KW-0863">Zinc-finger</keyword>
<proteinExistence type="inferred from homology"/>
<dbReference type="EC" id="2.3.2.27"/>
<dbReference type="EMBL" id="AB012241">
    <property type="protein sequence ID" value="BAB09036.1"/>
    <property type="status" value="ALT_SEQ"/>
    <property type="molecule type" value="Genomic_DNA"/>
</dbReference>
<dbReference type="EMBL" id="CP002688">
    <property type="protein sequence ID" value="AED94245.1"/>
    <property type="status" value="ALT_SEQ"/>
    <property type="molecule type" value="Genomic_DNA"/>
</dbReference>
<dbReference type="RefSeq" id="NP_198606.1">
    <property type="nucleotide sequence ID" value="NM_123149.1"/>
</dbReference>
<dbReference type="SMR" id="Q9FKD6"/>
<dbReference type="STRING" id="3702.Q9FKD6"/>
<dbReference type="GlyGen" id="Q9FKD6">
    <property type="glycosylation" value="1 site"/>
</dbReference>
<dbReference type="PaxDb" id="3702-AT5G37900.1"/>
<dbReference type="GeneID" id="833769"/>
<dbReference type="KEGG" id="ath:AT5G37900"/>
<dbReference type="Araport" id="AT5G37900"/>
<dbReference type="TAIR" id="AT5G37900"/>
<dbReference type="eggNOG" id="KOG3002">
    <property type="taxonomic scope" value="Eukaryota"/>
</dbReference>
<dbReference type="HOGENOM" id="CLU_040603_2_2_1"/>
<dbReference type="InParanoid" id="Q9FKD6"/>
<dbReference type="PhylomeDB" id="Q9FKD6"/>
<dbReference type="UniPathway" id="UPA00143"/>
<dbReference type="PRO" id="PR:Q9FKD6"/>
<dbReference type="Proteomes" id="UP000006548">
    <property type="component" value="Chromosome 5"/>
</dbReference>
<dbReference type="ExpressionAtlas" id="Q9FKD6">
    <property type="expression patterns" value="baseline and differential"/>
</dbReference>
<dbReference type="GO" id="GO:0016740">
    <property type="term" value="F:transferase activity"/>
    <property type="evidence" value="ECO:0007669"/>
    <property type="project" value="UniProtKB-KW"/>
</dbReference>
<dbReference type="GO" id="GO:0008270">
    <property type="term" value="F:zinc ion binding"/>
    <property type="evidence" value="ECO:0007669"/>
    <property type="project" value="UniProtKB-KW"/>
</dbReference>
<dbReference type="GO" id="GO:0016567">
    <property type="term" value="P:protein ubiquitination"/>
    <property type="evidence" value="ECO:0007669"/>
    <property type="project" value="UniProtKB-UniPathway"/>
</dbReference>
<dbReference type="CDD" id="cd16571">
    <property type="entry name" value="RING-HC_SIAHs"/>
    <property type="match status" value="1"/>
</dbReference>
<dbReference type="Gene3D" id="3.30.40.10">
    <property type="entry name" value="Zinc/RING finger domain, C3HC4 (zinc finger)"/>
    <property type="match status" value="1"/>
</dbReference>
<dbReference type="InterPro" id="IPR049548">
    <property type="entry name" value="Sina-like_RING"/>
</dbReference>
<dbReference type="InterPro" id="IPR044286">
    <property type="entry name" value="SINL_plant"/>
</dbReference>
<dbReference type="InterPro" id="IPR013083">
    <property type="entry name" value="Znf_RING/FYVE/PHD"/>
</dbReference>
<dbReference type="InterPro" id="IPR013010">
    <property type="entry name" value="Znf_SIAH"/>
</dbReference>
<dbReference type="PANTHER" id="PTHR46632">
    <property type="entry name" value="E3 UBIQUITIN-PROTEIN LIGASE SINA-LIKE 4"/>
    <property type="match status" value="1"/>
</dbReference>
<dbReference type="PANTHER" id="PTHR46632:SF3">
    <property type="entry name" value="E3 UBIQUITIN-PROTEIN LIGASE SINA-LIKE 7-RELATED"/>
    <property type="match status" value="1"/>
</dbReference>
<dbReference type="Pfam" id="PF21362">
    <property type="entry name" value="Sina_RING"/>
    <property type="match status" value="1"/>
</dbReference>
<dbReference type="Pfam" id="PF21361">
    <property type="entry name" value="Sina_ZnF"/>
    <property type="match status" value="1"/>
</dbReference>
<dbReference type="SUPFAM" id="SSF49599">
    <property type="entry name" value="TRAF domain-like"/>
    <property type="match status" value="1"/>
</dbReference>
<dbReference type="PROSITE" id="PS51081">
    <property type="entry name" value="ZF_SIAH"/>
    <property type="match status" value="1"/>
</dbReference>
<gene>
    <name type="ordered locus">At5g37900</name>
    <name type="ORF">K18L3.10</name>
</gene>
<name>SINL8_ARATH</name>
<evidence type="ECO:0000250" key="1"/>
<evidence type="ECO:0000255" key="2">
    <source>
        <dbReference type="PROSITE-ProRule" id="PRU00455"/>
    </source>
</evidence>
<evidence type="ECO:0000305" key="3"/>
<reference key="1">
    <citation type="journal article" date="1998" name="DNA Res.">
        <title>Structural analysis of Arabidopsis thaliana chromosome 5. VI. Sequence features of the regions of 1,367,185 bp covered by 19 physically assigned P1 and TAC clones.</title>
        <authorList>
            <person name="Kotani H."/>
            <person name="Nakamura Y."/>
            <person name="Sato S."/>
            <person name="Asamizu E."/>
            <person name="Kaneko T."/>
            <person name="Miyajima N."/>
            <person name="Tabata S."/>
        </authorList>
    </citation>
    <scope>NUCLEOTIDE SEQUENCE [LARGE SCALE GENOMIC DNA]</scope>
    <source>
        <strain>cv. Columbia</strain>
    </source>
</reference>
<reference key="2">
    <citation type="journal article" date="2017" name="Plant J.">
        <title>Araport11: a complete reannotation of the Arabidopsis thaliana reference genome.</title>
        <authorList>
            <person name="Cheng C.Y."/>
            <person name="Krishnakumar V."/>
            <person name="Chan A.P."/>
            <person name="Thibaud-Nissen F."/>
            <person name="Schobel S."/>
            <person name="Town C.D."/>
        </authorList>
    </citation>
    <scope>GENOME REANNOTATION</scope>
    <source>
        <strain>cv. Columbia</strain>
    </source>
</reference>
<organism>
    <name type="scientific">Arabidopsis thaliana</name>
    <name type="common">Mouse-ear cress</name>
    <dbReference type="NCBI Taxonomy" id="3702"/>
    <lineage>
        <taxon>Eukaryota</taxon>
        <taxon>Viridiplantae</taxon>
        <taxon>Streptophyta</taxon>
        <taxon>Embryophyta</taxon>
        <taxon>Tracheophyta</taxon>
        <taxon>Spermatophyta</taxon>
        <taxon>Magnoliopsida</taxon>
        <taxon>eudicotyledons</taxon>
        <taxon>Gunneridae</taxon>
        <taxon>Pentapetalae</taxon>
        <taxon>rosids</taxon>
        <taxon>malvids</taxon>
        <taxon>Brassicales</taxon>
        <taxon>Brassicaceae</taxon>
        <taxon>Camelineae</taxon>
        <taxon>Arabidopsis</taxon>
    </lineage>
</organism>
<sequence length="263" mass="29804">MVGALEALISQGHGGERVAKRQRSATLLDLDILDCPICCEGLTCPIFQCENGHLACSSCCPKLRNKCPACPMENILESILVTCPNDMFGCTESFLYGKKSTHEEECIFSLCSCPSLDCEYSGRYEDLYDHYKLTHISNSYWTTNCFRSSIPYKAPMLISDKIQITRVYEKKILFAVQCFRESCGVYVTVSCIAPSAPEVGQFSYQISYTVDEHTMVYRSPQMKRVRKVSFETPQENFMLIPHNLLRSELLDIKLSIVETSNQE</sequence>
<feature type="chain" id="PRO_0000299197" description="E3 ubiquitin-protein ligase SINA-like 8">
    <location>
        <begin position="1"/>
        <end position="263"/>
    </location>
</feature>
<feature type="zinc finger region" description="RING-type; degenerate">
    <location>
        <begin position="35"/>
        <end position="71"/>
    </location>
</feature>
<feature type="zinc finger region" description="SIAH-type" evidence="2">
    <location>
        <begin position="78"/>
        <end position="136"/>
    </location>
</feature>
<feature type="region of interest" description="SBD" evidence="1">
    <location>
        <begin position="75"/>
        <end position="261"/>
    </location>
</feature>
<feature type="binding site" evidence="1">
    <location>
        <position position="83"/>
    </location>
    <ligand>
        <name>Zn(2+)</name>
        <dbReference type="ChEBI" id="CHEBI:29105"/>
        <label>1</label>
    </ligand>
</feature>
<feature type="binding site" evidence="1">
    <location>
        <position position="90"/>
    </location>
    <ligand>
        <name>Zn(2+)</name>
        <dbReference type="ChEBI" id="CHEBI:29105"/>
        <label>1</label>
    </ligand>
</feature>
<feature type="binding site" evidence="1">
    <location>
        <position position="102"/>
    </location>
    <ligand>
        <name>Zn(2+)</name>
        <dbReference type="ChEBI" id="CHEBI:29105"/>
        <label>1</label>
    </ligand>
</feature>
<feature type="binding site" evidence="1">
    <location>
        <position position="106"/>
    </location>
    <ligand>
        <name>Zn(2+)</name>
        <dbReference type="ChEBI" id="CHEBI:29105"/>
        <label>1</label>
    </ligand>
</feature>
<feature type="binding site" evidence="1">
    <location>
        <position position="113"/>
    </location>
    <ligand>
        <name>Zn(2+)</name>
        <dbReference type="ChEBI" id="CHEBI:29105"/>
        <label>2</label>
    </ligand>
</feature>
<feature type="binding site" evidence="1">
    <location>
        <position position="118"/>
    </location>
    <ligand>
        <name>Zn(2+)</name>
        <dbReference type="ChEBI" id="CHEBI:29105"/>
        <label>2</label>
    </ligand>
</feature>
<feature type="binding site" evidence="1">
    <location>
        <position position="130"/>
    </location>
    <ligand>
        <name>Zn(2+)</name>
        <dbReference type="ChEBI" id="CHEBI:29105"/>
        <label>2</label>
    </ligand>
</feature>
<feature type="binding site" evidence="1">
    <location>
        <position position="135"/>
    </location>
    <ligand>
        <name>Zn(2+)</name>
        <dbReference type="ChEBI" id="CHEBI:29105"/>
        <label>2</label>
    </ligand>
</feature>